<reference evidence="9" key="1">
    <citation type="journal article" date="2004" name="Nature">
        <title>Genome sequence of the Brown Norway rat yields insights into mammalian evolution.</title>
        <authorList>
            <person name="Gibbs R.A."/>
            <person name="Weinstock G.M."/>
            <person name="Metzker M.L."/>
            <person name="Muzny D.M."/>
            <person name="Sodergren E.J."/>
            <person name="Scherer S."/>
            <person name="Scott G."/>
            <person name="Steffen D."/>
            <person name="Worley K.C."/>
            <person name="Burch P.E."/>
            <person name="Okwuonu G."/>
            <person name="Hines S."/>
            <person name="Lewis L."/>
            <person name="Deramo C."/>
            <person name="Delgado O."/>
            <person name="Dugan-Rocha S."/>
            <person name="Miner G."/>
            <person name="Morgan M."/>
            <person name="Hawes A."/>
            <person name="Gill R."/>
            <person name="Holt R.A."/>
            <person name="Adams M.D."/>
            <person name="Amanatides P.G."/>
            <person name="Baden-Tillson H."/>
            <person name="Barnstead M."/>
            <person name="Chin S."/>
            <person name="Evans C.A."/>
            <person name="Ferriera S."/>
            <person name="Fosler C."/>
            <person name="Glodek A."/>
            <person name="Gu Z."/>
            <person name="Jennings D."/>
            <person name="Kraft C.L."/>
            <person name="Nguyen T."/>
            <person name="Pfannkoch C.M."/>
            <person name="Sitter C."/>
            <person name="Sutton G.G."/>
            <person name="Venter J.C."/>
            <person name="Woodage T."/>
            <person name="Smith D."/>
            <person name="Lee H.-M."/>
            <person name="Gustafson E."/>
            <person name="Cahill P."/>
            <person name="Kana A."/>
            <person name="Doucette-Stamm L."/>
            <person name="Weinstock K."/>
            <person name="Fechtel K."/>
            <person name="Weiss R.B."/>
            <person name="Dunn D.M."/>
            <person name="Green E.D."/>
            <person name="Blakesley R.W."/>
            <person name="Bouffard G.G."/>
            <person name="De Jong P.J."/>
            <person name="Osoegawa K."/>
            <person name="Zhu B."/>
            <person name="Marra M."/>
            <person name="Schein J."/>
            <person name="Bosdet I."/>
            <person name="Fjell C."/>
            <person name="Jones S."/>
            <person name="Krzywinski M."/>
            <person name="Mathewson C."/>
            <person name="Siddiqui A."/>
            <person name="Wye N."/>
            <person name="McPherson J."/>
            <person name="Zhao S."/>
            <person name="Fraser C.M."/>
            <person name="Shetty J."/>
            <person name="Shatsman S."/>
            <person name="Geer K."/>
            <person name="Chen Y."/>
            <person name="Abramzon S."/>
            <person name="Nierman W.C."/>
            <person name="Havlak P.H."/>
            <person name="Chen R."/>
            <person name="Durbin K.J."/>
            <person name="Egan A."/>
            <person name="Ren Y."/>
            <person name="Song X.-Z."/>
            <person name="Li B."/>
            <person name="Liu Y."/>
            <person name="Qin X."/>
            <person name="Cawley S."/>
            <person name="Cooney A.J."/>
            <person name="D'Souza L.M."/>
            <person name="Martin K."/>
            <person name="Wu J.Q."/>
            <person name="Gonzalez-Garay M.L."/>
            <person name="Jackson A.R."/>
            <person name="Kalafus K.J."/>
            <person name="McLeod M.P."/>
            <person name="Milosavljevic A."/>
            <person name="Virk D."/>
            <person name="Volkov A."/>
            <person name="Wheeler D.A."/>
            <person name="Zhang Z."/>
            <person name="Bailey J.A."/>
            <person name="Eichler E.E."/>
            <person name="Tuzun E."/>
            <person name="Birney E."/>
            <person name="Mongin E."/>
            <person name="Ureta-Vidal A."/>
            <person name="Woodwark C."/>
            <person name="Zdobnov E."/>
            <person name="Bork P."/>
            <person name="Suyama M."/>
            <person name="Torrents D."/>
            <person name="Alexandersson M."/>
            <person name="Trask B.J."/>
            <person name="Young J.M."/>
            <person name="Huang H."/>
            <person name="Wang H."/>
            <person name="Xing H."/>
            <person name="Daniels S."/>
            <person name="Gietzen D."/>
            <person name="Schmidt J."/>
            <person name="Stevens K."/>
            <person name="Vitt U."/>
            <person name="Wingrove J."/>
            <person name="Camara F."/>
            <person name="Mar Alba M."/>
            <person name="Abril J.F."/>
            <person name="Guigo R."/>
            <person name="Smit A."/>
            <person name="Dubchak I."/>
            <person name="Rubin E.M."/>
            <person name="Couronne O."/>
            <person name="Poliakov A."/>
            <person name="Huebner N."/>
            <person name="Ganten D."/>
            <person name="Goesele C."/>
            <person name="Hummel O."/>
            <person name="Kreitler T."/>
            <person name="Lee Y.-A."/>
            <person name="Monti J."/>
            <person name="Schulz H."/>
            <person name="Zimdahl H."/>
            <person name="Himmelbauer H."/>
            <person name="Lehrach H."/>
            <person name="Jacob H.J."/>
            <person name="Bromberg S."/>
            <person name="Gullings-Handley J."/>
            <person name="Jensen-Seaman M.I."/>
            <person name="Kwitek A.E."/>
            <person name="Lazar J."/>
            <person name="Pasko D."/>
            <person name="Tonellato P.J."/>
            <person name="Twigger S."/>
            <person name="Ponting C.P."/>
            <person name="Duarte J.M."/>
            <person name="Rice S."/>
            <person name="Goodstadt L."/>
            <person name="Beatson S.A."/>
            <person name="Emes R.D."/>
            <person name="Winter E.E."/>
            <person name="Webber C."/>
            <person name="Brandt P."/>
            <person name="Nyakatura G."/>
            <person name="Adetobi M."/>
            <person name="Chiaromonte F."/>
            <person name="Elnitski L."/>
            <person name="Eswara P."/>
            <person name="Hardison R.C."/>
            <person name="Hou M."/>
            <person name="Kolbe D."/>
            <person name="Makova K."/>
            <person name="Miller W."/>
            <person name="Nekrutenko A."/>
            <person name="Riemer C."/>
            <person name="Schwartz S."/>
            <person name="Taylor J."/>
            <person name="Yang S."/>
            <person name="Zhang Y."/>
            <person name="Lindpaintner K."/>
            <person name="Andrews T.D."/>
            <person name="Caccamo M."/>
            <person name="Clamp M."/>
            <person name="Clarke L."/>
            <person name="Curwen V."/>
            <person name="Durbin R.M."/>
            <person name="Eyras E."/>
            <person name="Searle S.M."/>
            <person name="Cooper G.M."/>
            <person name="Batzoglou S."/>
            <person name="Brudno M."/>
            <person name="Sidow A."/>
            <person name="Stone E.A."/>
            <person name="Payseur B.A."/>
            <person name="Bourque G."/>
            <person name="Lopez-Otin C."/>
            <person name="Puente X.S."/>
            <person name="Chakrabarti K."/>
            <person name="Chatterji S."/>
            <person name="Dewey C."/>
            <person name="Pachter L."/>
            <person name="Bray N."/>
            <person name="Yap V.B."/>
            <person name="Caspi A."/>
            <person name="Tesler G."/>
            <person name="Pevzner P.A."/>
            <person name="Haussler D."/>
            <person name="Roskin K.M."/>
            <person name="Baertsch R."/>
            <person name="Clawson H."/>
            <person name="Furey T.S."/>
            <person name="Hinrichs A.S."/>
            <person name="Karolchik D."/>
            <person name="Kent W.J."/>
            <person name="Rosenbloom K.R."/>
            <person name="Trumbower H."/>
            <person name="Weirauch M."/>
            <person name="Cooper D.N."/>
            <person name="Stenson P.D."/>
            <person name="Ma B."/>
            <person name="Brent M."/>
            <person name="Arumugam M."/>
            <person name="Shteynberg D."/>
            <person name="Copley R.R."/>
            <person name="Taylor M.S."/>
            <person name="Riethman H."/>
            <person name="Mudunuri U."/>
            <person name="Peterson J."/>
            <person name="Guyer M."/>
            <person name="Felsenfeld A."/>
            <person name="Old S."/>
            <person name="Mockrin S."/>
            <person name="Collins F.S."/>
        </authorList>
    </citation>
    <scope>NUCLEOTIDE SEQUENCE [LARGE SCALE GENOMIC DNA]</scope>
    <source>
        <strain evidence="9">Brown Norway</strain>
    </source>
</reference>
<reference evidence="8" key="2">
    <citation type="submission" date="2005-07" db="EMBL/GenBank/DDBJ databases">
        <authorList>
            <person name="Mural R.J."/>
            <person name="Adams M.D."/>
            <person name="Myers E.W."/>
            <person name="Smith H.O."/>
            <person name="Venter J.C."/>
        </authorList>
    </citation>
    <scope>NUCLEOTIDE SEQUENCE [LARGE SCALE GENOMIC DNA]</scope>
</reference>
<reference evidence="7" key="3">
    <citation type="journal article" date="2012" name="Mol. Cell">
        <title>Molecular machinery for insertion of tail-anchored membrane proteins into the endoplasmic reticulum membrane in mammalian cells.</title>
        <authorList>
            <person name="Yamamoto Y."/>
            <person name="Sakisaka T."/>
        </authorList>
    </citation>
    <scope>FUNCTION</scope>
    <scope>IDENTIFICATION IN GET COMPLEX</scope>
    <scope>INTERACTION WITH GET1 AND GET3</scope>
</reference>
<reference evidence="7" key="4">
    <citation type="journal article" date="2016" name="J. Biol. Chem.">
        <title>Tail-anchored protein insertion in mammals: function and reciprocal interactions of the two subunits of the TRC40 receptor.</title>
        <authorList>
            <person name="Colombo S.F."/>
            <person name="Cardani S."/>
            <person name="Maroli A."/>
            <person name="Vitiello A."/>
            <person name="Soffientini P."/>
            <person name="Crespi A."/>
            <person name="Bram R.F."/>
            <person name="Benfante R."/>
            <person name="Borgese N."/>
        </authorList>
    </citation>
    <scope>FUNCTION</scope>
</reference>
<protein>
    <recommendedName>
        <fullName evidence="3">ATPase Get3</fullName>
        <ecNumber evidence="1">3.6.4.-</ecNumber>
    </recommendedName>
    <alternativeName>
        <fullName evidence="3">Arsenical pump-driving ATPase</fullName>
    </alternativeName>
    <alternativeName>
        <fullName evidence="3">Arsenite-stimulated ATPase</fullName>
    </alternativeName>
    <alternativeName>
        <fullName evidence="3">Guided entry of tail-anchored proteins factor 3, ATPase</fullName>
    </alternativeName>
</protein>
<accession>G3V9T7</accession>
<feature type="initiator methionine" description="Removed" evidence="1">
    <location>
        <position position="1"/>
    </location>
</feature>
<feature type="chain" id="PRO_0000452581" description="ATPase Get3">
    <location>
        <begin position="2"/>
        <end position="348"/>
    </location>
</feature>
<feature type="active site" evidence="3">
    <location>
        <position position="74"/>
    </location>
</feature>
<feature type="binding site" evidence="2 3">
    <location>
        <position position="45"/>
    </location>
    <ligand>
        <name>ATP</name>
        <dbReference type="ChEBI" id="CHEBI:30616"/>
        <note>ligand shared between dimeric partners</note>
    </ligand>
</feature>
<feature type="binding site" evidence="2 3">
    <location>
        <position position="46"/>
    </location>
    <ligand>
        <name>ATP</name>
        <dbReference type="ChEBI" id="CHEBI:30616"/>
        <note>ligand shared between dimeric partners</note>
    </ligand>
</feature>
<feature type="binding site" evidence="2 3">
    <location>
        <position position="49"/>
    </location>
    <ligand>
        <name>ATP</name>
        <dbReference type="ChEBI" id="CHEBI:30616"/>
        <note>ligand shared between dimeric partners</note>
    </ligand>
</feature>
<feature type="binding site" evidence="2 3">
    <location>
        <position position="50"/>
    </location>
    <ligand>
        <name>ATP</name>
        <dbReference type="ChEBI" id="CHEBI:30616"/>
        <note>ligand shared between dimeric partners</note>
    </ligand>
</feature>
<feature type="binding site" evidence="2 3">
    <location>
        <position position="51"/>
    </location>
    <ligand>
        <name>ATP</name>
        <dbReference type="ChEBI" id="CHEBI:30616"/>
        <note>ligand shared between dimeric partners</note>
    </ligand>
</feature>
<feature type="binding site" evidence="2 3">
    <location>
        <position position="52"/>
    </location>
    <ligand>
        <name>ATP</name>
        <dbReference type="ChEBI" id="CHEBI:30616"/>
        <note>ligand shared between dimeric partners</note>
    </ligand>
</feature>
<feature type="binding site" evidence="2 3">
    <location>
        <position position="251"/>
    </location>
    <ligand>
        <name>ATP</name>
        <dbReference type="ChEBI" id="CHEBI:30616"/>
        <note>ligand shared between dimeric partners</note>
    </ligand>
</feature>
<feature type="binding site" evidence="2 3">
    <location>
        <position position="278"/>
    </location>
    <ligand>
        <name>ATP</name>
        <dbReference type="ChEBI" id="CHEBI:30616"/>
        <note>ligand shared between dimeric partners</note>
    </ligand>
</feature>
<feature type="binding site" evidence="1 3">
    <location>
        <position position="289"/>
    </location>
    <ligand>
        <name>Zn(2+)</name>
        <dbReference type="ChEBI" id="CHEBI:29105"/>
        <note>ligand shared between dimeric partners</note>
    </ligand>
</feature>
<feature type="binding site" evidence="1 3">
    <location>
        <position position="292"/>
    </location>
    <ligand>
        <name>Zn(2+)</name>
        <dbReference type="ChEBI" id="CHEBI:29105"/>
        <note>ligand shared between dimeric partners</note>
    </ligand>
</feature>
<feature type="binding site" evidence="2">
    <location>
        <position position="319"/>
    </location>
    <ligand>
        <name>ATP</name>
        <dbReference type="ChEBI" id="CHEBI:30616"/>
        <note>ligand shared between dimeric partners</note>
    </ligand>
</feature>
<feature type="binding site" evidence="2">
    <location>
        <position position="321"/>
    </location>
    <ligand>
        <name>ATP</name>
        <dbReference type="ChEBI" id="CHEBI:30616"/>
        <note>ligand shared between dimeric partners</note>
    </ligand>
</feature>
<feature type="modified residue" description="N-acetylalanine" evidence="1">
    <location>
        <position position="2"/>
    </location>
</feature>
<evidence type="ECO:0000250" key="1">
    <source>
        <dbReference type="UniProtKB" id="O43681"/>
    </source>
</evidence>
<evidence type="ECO:0000250" key="2">
    <source>
        <dbReference type="UniProtKB" id="Q6IQE5"/>
    </source>
</evidence>
<evidence type="ECO:0000255" key="3">
    <source>
        <dbReference type="HAMAP-Rule" id="MF_03112"/>
    </source>
</evidence>
<evidence type="ECO:0000269" key="4">
    <source>
    </source>
</evidence>
<evidence type="ECO:0000269" key="5">
    <source>
    </source>
</evidence>
<evidence type="ECO:0000303" key="6">
    <source>
    </source>
</evidence>
<evidence type="ECO:0000305" key="7"/>
<evidence type="ECO:0000312" key="8">
    <source>
        <dbReference type="EMBL" id="EDL92167.1"/>
    </source>
</evidence>
<evidence type="ECO:0000312" key="9">
    <source>
        <dbReference type="Proteomes" id="UP000002494"/>
    </source>
</evidence>
<evidence type="ECO:0000312" key="10">
    <source>
        <dbReference type="RGD" id="1307906"/>
    </source>
</evidence>
<gene>
    <name evidence="10" type="primary">Get3</name>
    <name evidence="3" type="synonym">Asna1</name>
    <name evidence="6" type="synonym">Trc40</name>
</gene>
<organism evidence="9">
    <name type="scientific">Rattus norvegicus</name>
    <name type="common">Rat</name>
    <dbReference type="NCBI Taxonomy" id="10116"/>
    <lineage>
        <taxon>Eukaryota</taxon>
        <taxon>Metazoa</taxon>
        <taxon>Chordata</taxon>
        <taxon>Craniata</taxon>
        <taxon>Vertebrata</taxon>
        <taxon>Euteleostomi</taxon>
        <taxon>Mammalia</taxon>
        <taxon>Eutheria</taxon>
        <taxon>Euarchontoglires</taxon>
        <taxon>Glires</taxon>
        <taxon>Rodentia</taxon>
        <taxon>Myomorpha</taxon>
        <taxon>Muroidea</taxon>
        <taxon>Muridae</taxon>
        <taxon>Murinae</taxon>
        <taxon>Rattus</taxon>
    </lineage>
</organism>
<comment type="function">
    <text evidence="3 4 5">ATPase required for the post-translational delivery of tail-anchored (TA) proteins to the endoplasmic reticulum. Recognizes and selectively binds the transmembrane domain of TA proteins in the cytosol. This complex then targets to the endoplasmic reticulum by membrane-bound receptors GET1/WRB and CAMLG/GET2, where the tail-anchored protein is released for insertion. This process is regulated by ATP binding and hydrolysis. ATP binding drives the homodimer towards the closed dimer state, facilitating recognition of newly synthesized TA membrane proteins. ATP hydrolysis is required for insertion. Subsequently, the homodimer reverts towards the open dimer state, lowering its affinity for the GET1-CAMLG receptor, and returning it to the cytosol to initiate a new round of targeting.</text>
</comment>
<comment type="catalytic activity">
    <reaction evidence="1">
        <text>ATP + H2O = ADP + phosphate + H(+)</text>
        <dbReference type="Rhea" id="RHEA:13065"/>
        <dbReference type="ChEBI" id="CHEBI:15377"/>
        <dbReference type="ChEBI" id="CHEBI:15378"/>
        <dbReference type="ChEBI" id="CHEBI:30616"/>
        <dbReference type="ChEBI" id="CHEBI:43474"/>
        <dbReference type="ChEBI" id="CHEBI:456216"/>
    </reaction>
</comment>
<comment type="subunit">
    <text evidence="1 3 4">Homodimer (By similarity). Component of the Golgi to ER traffic (GET) complex, which is composed of GET1/WRB, CAMLG/GET2 and GET3/TRC40 (PubMed:23041287). Within the complex, CAMLG and GET1 form a heterotetramer which is stabilized by phosphatidylinositol binding and which binds to the GET3 homodimer (By similarity). Interacts with CAMLG/GET2 (via N-terminus) (PubMed:23041287). GET3 shows a higher affinity for CAMLG than for GET1 (By similarity). Interacts with SERP1 and SEC61B (By similarity). Interacts with GET4 (By similarity).</text>
</comment>
<comment type="subcellular location">
    <subcellularLocation>
        <location evidence="1 3">Cytoplasm</location>
    </subcellularLocation>
    <subcellularLocation>
        <location evidence="1 3">Endoplasmic reticulum</location>
    </subcellularLocation>
    <subcellularLocation>
        <location evidence="1 3">Nucleus</location>
        <location evidence="1 3">Nucleolus</location>
    </subcellularLocation>
</comment>
<comment type="similarity">
    <text evidence="3">Belongs to the arsA ATPase family.</text>
</comment>
<dbReference type="EC" id="3.6.4.-" evidence="1"/>
<dbReference type="EMBL" id="AABR07072634">
    <property type="status" value="NOT_ANNOTATED_CDS"/>
    <property type="molecule type" value="Genomic_DNA"/>
</dbReference>
<dbReference type="EMBL" id="CH473972">
    <property type="protein sequence ID" value="EDL92167.1"/>
    <property type="molecule type" value="Genomic_DNA"/>
</dbReference>
<dbReference type="RefSeq" id="NP_001093975.1">
    <property type="nucleotide sequence ID" value="NM_001100505.1"/>
</dbReference>
<dbReference type="RefSeq" id="XP_008770589.1">
    <property type="nucleotide sequence ID" value="XM_008772367.2"/>
</dbReference>
<dbReference type="RefSeq" id="XP_008770590.1">
    <property type="nucleotide sequence ID" value="XM_008772368.2"/>
</dbReference>
<dbReference type="RefSeq" id="XP_008770591.1">
    <property type="nucleotide sequence ID" value="XM_008772369.2"/>
</dbReference>
<dbReference type="RefSeq" id="XP_063133901.1">
    <property type="nucleotide sequence ID" value="XM_063277831.1"/>
</dbReference>
<dbReference type="SMR" id="G3V9T7"/>
<dbReference type="FunCoup" id="G3V9T7">
    <property type="interactions" value="3121"/>
</dbReference>
<dbReference type="STRING" id="10116.ENSRNOP00000059647"/>
<dbReference type="PhosphoSitePlus" id="G3V9T7"/>
<dbReference type="jPOST" id="G3V9T7"/>
<dbReference type="PaxDb" id="10116-ENSRNOP00000059647"/>
<dbReference type="Ensembl" id="ENSRNOT00000067518.2">
    <property type="protein sequence ID" value="ENSRNOP00000059647.1"/>
    <property type="gene ID" value="ENSRNOG00000003747.7"/>
</dbReference>
<dbReference type="GeneID" id="288919"/>
<dbReference type="KEGG" id="rno:288919"/>
<dbReference type="AGR" id="RGD:1307906"/>
<dbReference type="CTD" id="439"/>
<dbReference type="RGD" id="1307906">
    <property type="gene designation" value="Get3"/>
</dbReference>
<dbReference type="eggNOG" id="KOG2825">
    <property type="taxonomic scope" value="Eukaryota"/>
</dbReference>
<dbReference type="GeneTree" id="ENSGT00390000003817"/>
<dbReference type="HOGENOM" id="CLU_040761_0_0_1"/>
<dbReference type="InParanoid" id="G3V9T7"/>
<dbReference type="OMA" id="MDAPYEF"/>
<dbReference type="OrthoDB" id="1770at2759"/>
<dbReference type="PRO" id="PR:G3V9T7"/>
<dbReference type="Proteomes" id="UP000002494">
    <property type="component" value="Chromosome 19"/>
</dbReference>
<dbReference type="Proteomes" id="UP000234681">
    <property type="component" value="Chromosome 19"/>
</dbReference>
<dbReference type="GO" id="GO:0005789">
    <property type="term" value="C:endoplasmic reticulum membrane"/>
    <property type="evidence" value="ECO:0000266"/>
    <property type="project" value="RGD"/>
</dbReference>
<dbReference type="GO" id="GO:0043529">
    <property type="term" value="C:GET complex"/>
    <property type="evidence" value="ECO:0000353"/>
    <property type="project" value="UniProtKB"/>
</dbReference>
<dbReference type="GO" id="GO:0005730">
    <property type="term" value="C:nucleolus"/>
    <property type="evidence" value="ECO:0007669"/>
    <property type="project" value="UniProtKB-SubCell"/>
</dbReference>
<dbReference type="GO" id="GO:0005654">
    <property type="term" value="C:nucleoplasm"/>
    <property type="evidence" value="ECO:0007669"/>
    <property type="project" value="Ensembl"/>
</dbReference>
<dbReference type="GO" id="GO:0005524">
    <property type="term" value="F:ATP binding"/>
    <property type="evidence" value="ECO:0007669"/>
    <property type="project" value="UniProtKB-UniRule"/>
</dbReference>
<dbReference type="GO" id="GO:0016887">
    <property type="term" value="F:ATP hydrolysis activity"/>
    <property type="evidence" value="ECO:0000266"/>
    <property type="project" value="RGD"/>
</dbReference>
<dbReference type="GO" id="GO:0032977">
    <property type="term" value="F:membrane insertase activity"/>
    <property type="evidence" value="ECO:0000266"/>
    <property type="project" value="RGD"/>
</dbReference>
<dbReference type="GO" id="GO:0046872">
    <property type="term" value="F:metal ion binding"/>
    <property type="evidence" value="ECO:0007669"/>
    <property type="project" value="UniProtKB-KW"/>
</dbReference>
<dbReference type="GO" id="GO:0071816">
    <property type="term" value="P:tail-anchored membrane protein insertion into ER membrane"/>
    <property type="evidence" value="ECO:0000314"/>
    <property type="project" value="UniProtKB"/>
</dbReference>
<dbReference type="CDD" id="cd02035">
    <property type="entry name" value="ArsA"/>
    <property type="match status" value="1"/>
</dbReference>
<dbReference type="FunFam" id="3.40.50.300:FF:000235">
    <property type="entry name" value="ATPase ASNA1"/>
    <property type="match status" value="1"/>
</dbReference>
<dbReference type="Gene3D" id="3.40.50.300">
    <property type="entry name" value="P-loop containing nucleotide triphosphate hydrolases"/>
    <property type="match status" value="1"/>
</dbReference>
<dbReference type="HAMAP" id="MF_03112">
    <property type="entry name" value="Asna1_Get3"/>
    <property type="match status" value="1"/>
</dbReference>
<dbReference type="InterPro" id="IPR025723">
    <property type="entry name" value="Anion-transp_ATPase-like_dom"/>
</dbReference>
<dbReference type="InterPro" id="IPR016300">
    <property type="entry name" value="ATPase_ArsA/GET3"/>
</dbReference>
<dbReference type="InterPro" id="IPR027542">
    <property type="entry name" value="ATPase_ArsA/GET3_euk"/>
</dbReference>
<dbReference type="InterPro" id="IPR027417">
    <property type="entry name" value="P-loop_NTPase"/>
</dbReference>
<dbReference type="NCBIfam" id="TIGR00345">
    <property type="entry name" value="GET3_arsA_TRC40"/>
    <property type="match status" value="1"/>
</dbReference>
<dbReference type="PANTHER" id="PTHR10803">
    <property type="entry name" value="ARSENICAL PUMP-DRIVING ATPASE ARSENITE-TRANSLOCATING ATPASE"/>
    <property type="match status" value="1"/>
</dbReference>
<dbReference type="PANTHER" id="PTHR10803:SF3">
    <property type="entry name" value="ATPASE GET3"/>
    <property type="match status" value="1"/>
</dbReference>
<dbReference type="Pfam" id="PF02374">
    <property type="entry name" value="ArsA_ATPase"/>
    <property type="match status" value="1"/>
</dbReference>
<dbReference type="SUPFAM" id="SSF52540">
    <property type="entry name" value="P-loop containing nucleoside triphosphate hydrolases"/>
    <property type="match status" value="1"/>
</dbReference>
<sequence length="348" mass="38823">MAAGVAGWGVEAEEFEDAPDVEPLEPTLSNIIEQRSLKWIFVGGKGGVGKTTCSCSLAVQLSKGRESVLIISTDPAHNISDAFDQKFSKVPTKVKGYDNLFAMEIDPSLGVAELPDEFFEEDNMLSMGKKMMQEAMSAFPGIDEAMSYAEVMRLVKGMNFSVVVFDTAPTGHTLRLLNFPTIVERGLGRLMQIKNQISPFISQMCNMLGLGDMNADQLASKLEETLPVIRSVSEQFKDPEQTTFICVCIAEFLSLYETERLIQELAKCKIDTHNIIVNQLVFPDPEKPCKMCEARHKIQAKYLDQMEDLYEDFHIVKLPLLPHEVRGADKVNTFSALLLEPYKPPSTQ</sequence>
<name>GET3_RAT</name>
<keyword id="KW-0007">Acetylation</keyword>
<keyword id="KW-0067">ATP-binding</keyword>
<keyword id="KW-0963">Cytoplasm</keyword>
<keyword id="KW-0256">Endoplasmic reticulum</keyword>
<keyword id="KW-0378">Hydrolase</keyword>
<keyword id="KW-0479">Metal-binding</keyword>
<keyword id="KW-0547">Nucleotide-binding</keyword>
<keyword id="KW-0539">Nucleus</keyword>
<keyword id="KW-1185">Reference proteome</keyword>
<keyword id="KW-0813">Transport</keyword>
<keyword id="KW-0862">Zinc</keyword>
<proteinExistence type="evidence at protein level"/>